<organism>
    <name type="scientific">Mus musculus</name>
    <name type="common">Mouse</name>
    <dbReference type="NCBI Taxonomy" id="10090"/>
    <lineage>
        <taxon>Eukaryota</taxon>
        <taxon>Metazoa</taxon>
        <taxon>Chordata</taxon>
        <taxon>Craniata</taxon>
        <taxon>Vertebrata</taxon>
        <taxon>Euteleostomi</taxon>
        <taxon>Mammalia</taxon>
        <taxon>Eutheria</taxon>
        <taxon>Euarchontoglires</taxon>
        <taxon>Glires</taxon>
        <taxon>Rodentia</taxon>
        <taxon>Myomorpha</taxon>
        <taxon>Muroidea</taxon>
        <taxon>Muridae</taxon>
        <taxon>Murinae</taxon>
        <taxon>Mus</taxon>
        <taxon>Mus</taxon>
    </lineage>
</organism>
<dbReference type="EMBL" id="AB025412">
    <property type="protein sequence ID" value="BAA77398.1"/>
    <property type="molecule type" value="mRNA"/>
</dbReference>
<dbReference type="EMBL" id="AF195418">
    <property type="protein sequence ID" value="AAF28316.1"/>
    <property type="molecule type" value="mRNA"/>
</dbReference>
<dbReference type="EMBL" id="MG387139">
    <property type="protein sequence ID" value="AUQ44320.1"/>
    <property type="molecule type" value="mRNA"/>
</dbReference>
<dbReference type="EMBL" id="MG387140">
    <property type="protein sequence ID" value="AUQ44321.1"/>
    <property type="molecule type" value="mRNA"/>
</dbReference>
<dbReference type="EMBL" id="MG387141">
    <property type="protein sequence ID" value="AUQ44322.1"/>
    <property type="molecule type" value="mRNA"/>
</dbReference>
<dbReference type="EMBL" id="MG387142">
    <property type="protein sequence ID" value="AUQ44323.1"/>
    <property type="molecule type" value="mRNA"/>
</dbReference>
<dbReference type="EMBL" id="MG387143">
    <property type="protein sequence ID" value="AUQ44324.1"/>
    <property type="molecule type" value="mRNA"/>
</dbReference>
<dbReference type="EMBL" id="MG387144">
    <property type="protein sequence ID" value="AUQ44325.1"/>
    <property type="molecule type" value="mRNA"/>
</dbReference>
<dbReference type="EMBL" id="MG387145">
    <property type="protein sequence ID" value="AUQ44326.1"/>
    <property type="molecule type" value="mRNA"/>
</dbReference>
<dbReference type="EMBL" id="MG387146">
    <property type="protein sequence ID" value="AUQ44327.1"/>
    <property type="molecule type" value="mRNA"/>
</dbReference>
<dbReference type="EMBL" id="AK011924">
    <property type="protein sequence ID" value="BAB27919.1"/>
    <property type="molecule type" value="mRNA"/>
</dbReference>
<dbReference type="EMBL" id="AK031268">
    <property type="protein sequence ID" value="BAC27329.1"/>
    <property type="molecule type" value="mRNA"/>
</dbReference>
<dbReference type="EMBL" id="AK122513">
    <property type="protein sequence ID" value="BAC65795.1"/>
    <property type="molecule type" value="mRNA"/>
</dbReference>
<dbReference type="EMBL" id="AK135844">
    <property type="protein sequence ID" value="BAE22691.1"/>
    <property type="status" value="ALT_INIT"/>
    <property type="molecule type" value="mRNA"/>
</dbReference>
<dbReference type="EMBL" id="AK136994">
    <property type="protein sequence ID" value="BAE23200.1"/>
    <property type="molecule type" value="mRNA"/>
</dbReference>
<dbReference type="CCDS" id="CCDS22303.1">
    <molecule id="Q9WTS6-1"/>
</dbReference>
<dbReference type="CCDS" id="CCDS85538.1">
    <molecule id="Q9WTS6-2"/>
</dbReference>
<dbReference type="PDB" id="6FAY">
    <property type="method" value="EM"/>
    <property type="resolution" value="3.80 A"/>
    <property type="chains" value="A=845-2715"/>
</dbReference>
<dbReference type="PDBsum" id="6FAY"/>
<dbReference type="EMDB" id="EMD-18889"/>
<dbReference type="EMDB" id="EMD-18890"/>
<dbReference type="EMDB" id="EMD-18891"/>
<dbReference type="SASBDB" id="Q9WTS6"/>
<dbReference type="SMR" id="Q9WTS6"/>
<dbReference type="FunCoup" id="Q9WTS6">
    <property type="interactions" value="828"/>
</dbReference>
<dbReference type="IntAct" id="Q9WTS6">
    <property type="interactions" value="2"/>
</dbReference>
<dbReference type="MINT" id="Q9WTS6"/>
<dbReference type="STRING" id="10090.ENSMUSP00000033965"/>
<dbReference type="GlyConnect" id="2431">
    <molecule id="Q9WTS6-2"/>
    <property type="glycosylation" value="3 N-Linked glycans (2 sites)"/>
</dbReference>
<dbReference type="GlyConnect" id="2757">
    <property type="glycosylation" value="4 N-Linked glycans (2 sites)"/>
</dbReference>
<dbReference type="GlyCosmos" id="Q9WTS6">
    <property type="glycosylation" value="17 sites, 4 glycans"/>
</dbReference>
<dbReference type="GlyGen" id="Q9WTS6">
    <property type="glycosylation" value="19 sites, 13 N-linked glycans (10 sites), 1 O-linked glycan (1 site)"/>
</dbReference>
<dbReference type="iPTMnet" id="Q9WTS6"/>
<dbReference type="PhosphoSitePlus" id="Q9WTS6"/>
<dbReference type="SwissPalm" id="Q9WTS6"/>
<dbReference type="jPOST" id="Q9WTS6"/>
<dbReference type="PaxDb" id="10090-ENSMUSP00000140141"/>
<dbReference type="ProteomicsDB" id="258991">
    <molecule id="Q9WTS6-1"/>
</dbReference>
<dbReference type="ProteomicsDB" id="258992">
    <molecule id="Q9WTS6-2"/>
</dbReference>
<dbReference type="AGR" id="MGI:1345183"/>
<dbReference type="MGI" id="MGI:1345183">
    <property type="gene designation" value="Tenm3"/>
</dbReference>
<dbReference type="eggNOG" id="KOG4659">
    <property type="taxonomic scope" value="Eukaryota"/>
</dbReference>
<dbReference type="InParanoid" id="Q9WTS6"/>
<dbReference type="PhylomeDB" id="Q9WTS6"/>
<dbReference type="ChiTaRS" id="Tenm3">
    <property type="organism name" value="mouse"/>
</dbReference>
<dbReference type="PRO" id="PR:Q9WTS6"/>
<dbReference type="Proteomes" id="UP000000589">
    <property type="component" value="Unplaced"/>
</dbReference>
<dbReference type="RNAct" id="Q9WTS6">
    <property type="molecule type" value="protein"/>
</dbReference>
<dbReference type="GO" id="GO:0030424">
    <property type="term" value="C:axon"/>
    <property type="evidence" value="ECO:0007669"/>
    <property type="project" value="UniProtKB-SubCell"/>
</dbReference>
<dbReference type="GO" id="GO:0098978">
    <property type="term" value="C:glutamatergic synapse"/>
    <property type="evidence" value="ECO:0000314"/>
    <property type="project" value="SynGO"/>
</dbReference>
<dbReference type="GO" id="GO:0016020">
    <property type="term" value="C:membrane"/>
    <property type="evidence" value="ECO:0000314"/>
    <property type="project" value="UniProtKB"/>
</dbReference>
<dbReference type="GO" id="GO:0005886">
    <property type="term" value="C:plasma membrane"/>
    <property type="evidence" value="ECO:0000314"/>
    <property type="project" value="UniProtKB"/>
</dbReference>
<dbReference type="GO" id="GO:0048787">
    <property type="term" value="C:presynaptic active zone membrane"/>
    <property type="evidence" value="ECO:0000314"/>
    <property type="project" value="SynGO"/>
</dbReference>
<dbReference type="GO" id="GO:0042802">
    <property type="term" value="F:identical protein binding"/>
    <property type="evidence" value="ECO:0000353"/>
    <property type="project" value="MGI"/>
</dbReference>
<dbReference type="GO" id="GO:0046982">
    <property type="term" value="F:protein heterodimerization activity"/>
    <property type="evidence" value="ECO:0000314"/>
    <property type="project" value="UniProtKB"/>
</dbReference>
<dbReference type="GO" id="GO:0042803">
    <property type="term" value="F:protein homodimerization activity"/>
    <property type="evidence" value="ECO:0000314"/>
    <property type="project" value="UniProtKB"/>
</dbReference>
<dbReference type="GO" id="GO:0030154">
    <property type="term" value="P:cell differentiation"/>
    <property type="evidence" value="ECO:0007669"/>
    <property type="project" value="UniProtKB-KW"/>
</dbReference>
<dbReference type="GO" id="GO:0007156">
    <property type="term" value="P:homophilic cell adhesion via plasma membrane adhesion molecules"/>
    <property type="evidence" value="ECO:0000314"/>
    <property type="project" value="UniProtKB"/>
</dbReference>
<dbReference type="GO" id="GO:0010976">
    <property type="term" value="P:positive regulation of neuron projection development"/>
    <property type="evidence" value="ECO:0000314"/>
    <property type="project" value="UniProtKB"/>
</dbReference>
<dbReference type="GO" id="GO:1903385">
    <property type="term" value="P:regulation of homophilic cell adhesion"/>
    <property type="evidence" value="ECO:0000314"/>
    <property type="project" value="UniProtKB"/>
</dbReference>
<dbReference type="GO" id="GO:0007165">
    <property type="term" value="P:signal transduction"/>
    <property type="evidence" value="ECO:0007669"/>
    <property type="project" value="InterPro"/>
</dbReference>
<dbReference type="GO" id="GO:0099560">
    <property type="term" value="P:synaptic membrane adhesion"/>
    <property type="evidence" value="ECO:0000314"/>
    <property type="project" value="SynGO"/>
</dbReference>
<dbReference type="CDD" id="cd00054">
    <property type="entry name" value="EGF_CA"/>
    <property type="match status" value="2"/>
</dbReference>
<dbReference type="FunFam" id="2.10.25.10:FF:000016">
    <property type="entry name" value="Teneurin transmembrane protein 2"/>
    <property type="match status" value="1"/>
</dbReference>
<dbReference type="FunFam" id="2.10.25.10:FF:000021">
    <property type="entry name" value="Teneurin transmembrane protein 2"/>
    <property type="match status" value="2"/>
</dbReference>
<dbReference type="FunFam" id="2.10.25.10:FF:000026">
    <property type="entry name" value="Teneurin transmembrane protein 2"/>
    <property type="match status" value="1"/>
</dbReference>
<dbReference type="FunFam" id="2.120.10.30:FF:000003">
    <property type="entry name" value="Teneurin transmembrane protein 2"/>
    <property type="match status" value="1"/>
</dbReference>
<dbReference type="FunFam" id="2.180.10.10:FF:000004">
    <property type="entry name" value="Teneurin transmembrane protein 3"/>
    <property type="match status" value="1"/>
</dbReference>
<dbReference type="FunFam" id="2.10.25.10:FF:000013">
    <property type="entry name" value="Teneurin transmembrane protein 4"/>
    <property type="match status" value="1"/>
</dbReference>
<dbReference type="FunFam" id="2.120.10.30:FF:000005">
    <property type="entry name" value="Teneurin transmembrane protein 4"/>
    <property type="match status" value="1"/>
</dbReference>
<dbReference type="FunFam" id="2.60.120.260:FF:000008">
    <property type="entry name" value="teneurin-3 isoform X2"/>
    <property type="match status" value="1"/>
</dbReference>
<dbReference type="Gene3D" id="2.60.120.260">
    <property type="entry name" value="Galactose-binding domain-like"/>
    <property type="match status" value="1"/>
</dbReference>
<dbReference type="Gene3D" id="2.10.25.10">
    <property type="entry name" value="Laminin"/>
    <property type="match status" value="7"/>
</dbReference>
<dbReference type="Gene3D" id="2.180.10.10">
    <property type="entry name" value="RHS repeat-associated core"/>
    <property type="match status" value="2"/>
</dbReference>
<dbReference type="Gene3D" id="2.120.10.30">
    <property type="entry name" value="TolB, C-terminal domain"/>
    <property type="match status" value="2"/>
</dbReference>
<dbReference type="InterPro" id="IPR011042">
    <property type="entry name" value="6-blade_b-propeller_TolB-like"/>
</dbReference>
<dbReference type="InterPro" id="IPR008969">
    <property type="entry name" value="CarboxyPept-like_regulatory"/>
</dbReference>
<dbReference type="InterPro" id="IPR000742">
    <property type="entry name" value="EGF-like_dom"/>
</dbReference>
<dbReference type="InterPro" id="IPR022385">
    <property type="entry name" value="Rhs_assc_core"/>
</dbReference>
<dbReference type="InterPro" id="IPR009471">
    <property type="entry name" value="Ten_N"/>
</dbReference>
<dbReference type="InterPro" id="IPR056822">
    <property type="entry name" value="TEN_NHL"/>
</dbReference>
<dbReference type="InterPro" id="IPR056820">
    <property type="entry name" value="TEN_TTR-like"/>
</dbReference>
<dbReference type="InterPro" id="IPR056823">
    <property type="entry name" value="TEN_YD-shell"/>
</dbReference>
<dbReference type="InterPro" id="IPR051216">
    <property type="entry name" value="Teneurin"/>
</dbReference>
<dbReference type="InterPro" id="IPR028916">
    <property type="entry name" value="Tox-GHH_dom"/>
</dbReference>
<dbReference type="InterPro" id="IPR006530">
    <property type="entry name" value="YD"/>
</dbReference>
<dbReference type="NCBIfam" id="TIGR03696">
    <property type="entry name" value="Rhs_assc_core"/>
    <property type="match status" value="1"/>
</dbReference>
<dbReference type="NCBIfam" id="TIGR01643">
    <property type="entry name" value="YD_repeat_2x"/>
    <property type="match status" value="2"/>
</dbReference>
<dbReference type="PANTHER" id="PTHR11219">
    <property type="entry name" value="TENEURIN AND N-ACETYLGLUCOSAMINE-1-PHOSPHODIESTER ALPHA-N-ACETYLGLUCOSAMINIDASE"/>
    <property type="match status" value="1"/>
</dbReference>
<dbReference type="PANTHER" id="PTHR11219:SF65">
    <property type="entry name" value="TENEURIN-3"/>
    <property type="match status" value="1"/>
</dbReference>
<dbReference type="Pfam" id="PF25024">
    <property type="entry name" value="EGF_TEN"/>
    <property type="match status" value="1"/>
</dbReference>
<dbReference type="Pfam" id="PF24329">
    <property type="entry name" value="FN-plug_TEN1-4"/>
    <property type="match status" value="1"/>
</dbReference>
<dbReference type="Pfam" id="PF23093">
    <property type="entry name" value="GBD_Tenm3"/>
    <property type="match status" value="1"/>
</dbReference>
<dbReference type="Pfam" id="PF06484">
    <property type="entry name" value="Ten_N"/>
    <property type="match status" value="2"/>
</dbReference>
<dbReference type="Pfam" id="PF25021">
    <property type="entry name" value="TEN_NHL"/>
    <property type="match status" value="1"/>
</dbReference>
<dbReference type="Pfam" id="PF25023">
    <property type="entry name" value="TEN_YD-shell"/>
    <property type="match status" value="1"/>
</dbReference>
<dbReference type="Pfam" id="PF23538">
    <property type="entry name" value="Teneurin_ABD"/>
    <property type="match status" value="1"/>
</dbReference>
<dbReference type="Pfam" id="PF15636">
    <property type="entry name" value="Tox-GHH"/>
    <property type="match status" value="1"/>
</dbReference>
<dbReference type="Pfam" id="PF25020">
    <property type="entry name" value="TTR_TEN1-4"/>
    <property type="match status" value="1"/>
</dbReference>
<dbReference type="SMART" id="SM00181">
    <property type="entry name" value="EGF"/>
    <property type="match status" value="8"/>
</dbReference>
<dbReference type="SUPFAM" id="SSF49464">
    <property type="entry name" value="Carboxypeptidase regulatory domain-like"/>
    <property type="match status" value="1"/>
</dbReference>
<dbReference type="SUPFAM" id="SSF101898">
    <property type="entry name" value="NHL repeat"/>
    <property type="match status" value="2"/>
</dbReference>
<dbReference type="PROSITE" id="PS00022">
    <property type="entry name" value="EGF_1"/>
    <property type="match status" value="8"/>
</dbReference>
<dbReference type="PROSITE" id="PS01186">
    <property type="entry name" value="EGF_2"/>
    <property type="match status" value="7"/>
</dbReference>
<dbReference type="PROSITE" id="PS50026">
    <property type="entry name" value="EGF_3"/>
    <property type="match status" value="5"/>
</dbReference>
<dbReference type="PROSITE" id="PS51361">
    <property type="entry name" value="TENEURIN_N"/>
    <property type="match status" value="1"/>
</dbReference>
<feature type="chain" id="PRO_0000259506" description="Teneurin-3">
    <location>
        <begin position="1"/>
        <end position="2715"/>
    </location>
</feature>
<feature type="topological domain" description="Cytoplasmic" evidence="1">
    <location>
        <begin position="1"/>
        <end position="310"/>
    </location>
</feature>
<feature type="transmembrane region" description="Helical" evidence="1">
    <location>
        <begin position="311"/>
        <end position="331"/>
    </location>
</feature>
<feature type="topological domain" description="Extracellular" evidence="1">
    <location>
        <begin position="332"/>
        <end position="2715"/>
    </location>
</feature>
<feature type="domain" description="Teneurin N-terminal" evidence="3">
    <location>
        <begin position="1"/>
        <end position="309"/>
    </location>
</feature>
<feature type="domain" description="EGF-like 1" evidence="2">
    <location>
        <begin position="514"/>
        <end position="545"/>
    </location>
</feature>
<feature type="domain" description="EGF-like 2" evidence="2">
    <location>
        <begin position="546"/>
        <end position="576"/>
    </location>
</feature>
<feature type="domain" description="EGF-like 3" evidence="2">
    <location>
        <begin position="578"/>
        <end position="610"/>
    </location>
</feature>
<feature type="domain" description="EGF-like 4" evidence="2">
    <location>
        <begin position="611"/>
        <end position="642"/>
    </location>
</feature>
<feature type="domain" description="EGF-like 5" evidence="2">
    <location>
        <begin position="644"/>
        <end position="677"/>
    </location>
</feature>
<feature type="domain" description="EGF-like 6" evidence="2">
    <location>
        <begin position="678"/>
        <end position="709"/>
    </location>
</feature>
<feature type="domain" description="EGF-like 7" evidence="2">
    <location>
        <begin position="710"/>
        <end position="739"/>
    </location>
</feature>
<feature type="domain" description="EGF-like 8" evidence="2">
    <location>
        <begin position="740"/>
        <end position="783"/>
    </location>
</feature>
<feature type="repeat" description="NHL 1">
    <location>
        <begin position="1181"/>
        <end position="1209"/>
    </location>
</feature>
<feature type="repeat" description="NHL 2">
    <location>
        <begin position="1216"/>
        <end position="1260"/>
    </location>
</feature>
<feature type="repeat" description="NHL 3">
    <location>
        <begin position="1286"/>
        <end position="1330"/>
    </location>
</feature>
<feature type="repeat" description="NHL 4">
    <location>
        <begin position="1347"/>
        <end position="1387"/>
    </location>
</feature>
<feature type="repeat" description="NHL 5">
    <location>
        <begin position="1418"/>
        <end position="1445"/>
    </location>
</feature>
<feature type="repeat" description="NHL 6">
    <location>
        <begin position="1474"/>
        <end position="1517"/>
    </location>
</feature>
<feature type="repeat" description="YD 1">
    <location>
        <begin position="1527"/>
        <end position="1546"/>
    </location>
</feature>
<feature type="repeat" description="YD 2">
    <location>
        <begin position="1563"/>
        <end position="1583"/>
    </location>
</feature>
<feature type="repeat" description="YD 3">
    <location>
        <begin position="1626"/>
        <end position="1645"/>
    </location>
</feature>
<feature type="repeat" description="YD 4">
    <location>
        <begin position="1646"/>
        <end position="1668"/>
    </location>
</feature>
<feature type="repeat" description="YD 5">
    <location>
        <begin position="1839"/>
        <end position="1858"/>
    </location>
</feature>
<feature type="repeat" description="YD 6">
    <location>
        <begin position="1880"/>
        <end position="1898"/>
    </location>
</feature>
<feature type="repeat" description="YD 7">
    <location>
        <begin position="1899"/>
        <end position="1919"/>
    </location>
</feature>
<feature type="repeat" description="YD 8">
    <location>
        <begin position="1926"/>
        <end position="1943"/>
    </location>
</feature>
<feature type="repeat" description="YD 9">
    <location>
        <begin position="1944"/>
        <end position="1965"/>
    </location>
</feature>
<feature type="repeat" description="YD 10">
    <location>
        <begin position="1966"/>
        <end position="1983"/>
    </location>
</feature>
<feature type="repeat" description="YD 11">
    <location>
        <begin position="1986"/>
        <end position="2006"/>
    </location>
</feature>
<feature type="repeat" description="YD 12">
    <location>
        <begin position="2009"/>
        <end position="2029"/>
    </location>
</feature>
<feature type="repeat" description="YD 13">
    <location>
        <begin position="2037"/>
        <end position="2056"/>
    </location>
</feature>
<feature type="repeat" description="YD 14">
    <location>
        <begin position="2062"/>
        <end position="2079"/>
    </location>
</feature>
<feature type="repeat" description="YD 15">
    <location>
        <begin position="2080"/>
        <end position="2106"/>
    </location>
</feature>
<feature type="repeat" description="YD 16">
    <location>
        <begin position="2108"/>
        <end position="2121"/>
    </location>
</feature>
<feature type="repeat" description="YD 17">
    <location>
        <begin position="2122"/>
        <end position="2145"/>
    </location>
</feature>
<feature type="repeat" description="YD 18">
    <location>
        <begin position="2148"/>
        <end position="2168"/>
    </location>
</feature>
<feature type="repeat" description="YD 19">
    <location>
        <begin position="2169"/>
        <end position="2189"/>
    </location>
</feature>
<feature type="repeat" description="YD 20">
    <location>
        <begin position="2191"/>
        <end position="2211"/>
    </location>
</feature>
<feature type="repeat" description="YD 21">
    <location>
        <begin position="2223"/>
        <end position="2243"/>
    </location>
</feature>
<feature type="repeat" description="YD 22">
    <location>
        <begin position="2245"/>
        <end position="2265"/>
    </location>
</feature>
<feature type="repeat" description="YD 23">
    <location>
        <begin position="2291"/>
        <end position="2332"/>
    </location>
</feature>
<feature type="region of interest" description="Disordered" evidence="4">
    <location>
        <begin position="1"/>
        <end position="38"/>
    </location>
</feature>
<feature type="region of interest" description="Disordered" evidence="4">
    <location>
        <begin position="142"/>
        <end position="223"/>
    </location>
</feature>
<feature type="compositionally biased region" description="Low complexity" evidence="4">
    <location>
        <begin position="142"/>
        <end position="153"/>
    </location>
</feature>
<feature type="compositionally biased region" description="Basic and acidic residues" evidence="4">
    <location>
        <begin position="159"/>
        <end position="168"/>
    </location>
</feature>
<feature type="compositionally biased region" description="Polar residues" evidence="4">
    <location>
        <begin position="171"/>
        <end position="182"/>
    </location>
</feature>
<feature type="compositionally biased region" description="Low complexity" evidence="4">
    <location>
        <begin position="201"/>
        <end position="213"/>
    </location>
</feature>
<feature type="glycosylation site" description="N-linked (GlcNAc...) asparagine" evidence="1">
    <location>
        <position position="345"/>
    </location>
</feature>
<feature type="glycosylation site" description="N-linked (GlcNAc...) asparagine" evidence="9">
    <location>
        <position position="380"/>
    </location>
</feature>
<feature type="glycosylation site" description="N-linked (GlcNAc...) asparagine" evidence="1">
    <location>
        <position position="419"/>
    </location>
</feature>
<feature type="glycosylation site" description="N-linked (GlcNAc...) asparagine" evidence="1">
    <location>
        <position position="670"/>
    </location>
</feature>
<feature type="glycosylation site" description="N-linked (GlcNAc...) asparagine" evidence="1">
    <location>
        <position position="869"/>
    </location>
</feature>
<feature type="glycosylation site" description="N-linked (GlcNAc...) asparagine" evidence="1">
    <location>
        <position position="892"/>
    </location>
</feature>
<feature type="glycosylation site" description="N-linked (GlcNAc...) asparagine" evidence="1">
    <location>
        <position position="1211"/>
    </location>
</feature>
<feature type="glycosylation site" description="N-linked (GlcNAc...) asparagine" evidence="1">
    <location>
        <position position="1543"/>
    </location>
</feature>
<feature type="glycosylation site" description="N-linked (GlcNAc...) asparagine" evidence="1">
    <location>
        <position position="1560"/>
    </location>
</feature>
<feature type="glycosylation site" description="N-linked (GlcNAc...) asparagine" evidence="1">
    <location>
        <position position="1656"/>
    </location>
</feature>
<feature type="glycosylation site" description="N-linked (GlcNAc...) asparagine" evidence="1">
    <location>
        <position position="1693"/>
    </location>
</feature>
<feature type="glycosylation site" description="N-linked (GlcNAc...) asparagine" evidence="1">
    <location>
        <position position="1751"/>
    </location>
</feature>
<feature type="glycosylation site" description="N-linked (GlcNAc...) asparagine" evidence="1">
    <location>
        <position position="1836"/>
    </location>
</feature>
<feature type="glycosylation site" description="N-linked (GlcNAc...) asparagine" evidence="1">
    <location>
        <position position="1937"/>
    </location>
</feature>
<feature type="glycosylation site" description="N-linked (GlcNAc...) asparagine" evidence="9">
    <location>
        <position position="2140"/>
    </location>
</feature>
<feature type="glycosylation site" description="N-linked (GlcNAc...) asparagine" evidence="1">
    <location>
        <position position="2280"/>
    </location>
</feature>
<feature type="glycosylation site" description="N-linked (GlcNAc...) asparagine" evidence="1">
    <location>
        <position position="2592"/>
    </location>
</feature>
<feature type="disulfide bond" evidence="2">
    <location>
        <begin position="518"/>
        <end position="528"/>
    </location>
</feature>
<feature type="disulfide bond" evidence="2">
    <location>
        <begin position="522"/>
        <end position="533"/>
    </location>
</feature>
<feature type="disulfide bond" evidence="2">
    <location>
        <begin position="535"/>
        <end position="544"/>
    </location>
</feature>
<feature type="disulfide bond" evidence="2">
    <location>
        <begin position="553"/>
        <end position="564"/>
    </location>
</feature>
<feature type="disulfide bond" evidence="2">
    <location>
        <begin position="566"/>
        <end position="575"/>
    </location>
</feature>
<feature type="disulfide bond" evidence="2">
    <location>
        <begin position="582"/>
        <end position="593"/>
    </location>
</feature>
<feature type="disulfide bond" evidence="2">
    <location>
        <begin position="587"/>
        <end position="598"/>
    </location>
</feature>
<feature type="disulfide bond" evidence="2">
    <location>
        <begin position="600"/>
        <end position="609"/>
    </location>
</feature>
<feature type="disulfide bond" evidence="2">
    <location>
        <begin position="614"/>
        <end position="625"/>
    </location>
</feature>
<feature type="disulfide bond" evidence="2">
    <location>
        <begin position="619"/>
        <end position="630"/>
    </location>
</feature>
<feature type="disulfide bond" evidence="2">
    <location>
        <begin position="632"/>
        <end position="641"/>
    </location>
</feature>
<feature type="disulfide bond" evidence="2">
    <location>
        <begin position="652"/>
        <end position="665"/>
    </location>
</feature>
<feature type="disulfide bond" evidence="2">
    <location>
        <begin position="667"/>
        <end position="676"/>
    </location>
</feature>
<feature type="disulfide bond" evidence="2">
    <location>
        <begin position="681"/>
        <end position="691"/>
    </location>
</feature>
<feature type="disulfide bond" evidence="2">
    <location>
        <begin position="685"/>
        <end position="696"/>
    </location>
</feature>
<feature type="disulfide bond" evidence="2">
    <location>
        <begin position="698"/>
        <end position="707"/>
    </location>
</feature>
<feature type="disulfide bond" evidence="2">
    <location>
        <begin position="712"/>
        <end position="722"/>
    </location>
</feature>
<feature type="disulfide bond" evidence="2">
    <location>
        <begin position="716"/>
        <end position="727"/>
    </location>
</feature>
<feature type="disulfide bond" evidence="2">
    <location>
        <begin position="729"/>
        <end position="738"/>
    </location>
</feature>
<feature type="disulfide bond" evidence="2">
    <location>
        <begin position="752"/>
        <end position="762"/>
    </location>
</feature>
<feature type="disulfide bond" evidence="2">
    <location>
        <begin position="756"/>
        <end position="771"/>
    </location>
</feature>
<feature type="disulfide bond" evidence="2">
    <location>
        <begin position="773"/>
        <end position="782"/>
    </location>
</feature>
<feature type="splice variant" id="VSP_021402" description="In isoform A0B0 and isoform A0B1." evidence="14 16 18">
    <location>
        <begin position="741"/>
        <end position="749"/>
    </location>
</feature>
<feature type="splice variant" id="VSP_059560" description="In isoform A2B1 and isoform A2B0." evidence="14">
    <original>K</original>
    <variation>KDKIGYK</variation>
    <location>
        <position position="749"/>
    </location>
</feature>
<feature type="splice variant" id="VSP_059561" description="In isoform A3B1 and isoform A3B0." evidence="14">
    <original>K</original>
    <variation>KADKIGYK</variation>
    <location>
        <position position="749"/>
    </location>
</feature>
<feature type="splice variant" id="VSP_059562" description="In isoform A1B0, isoform A2B0 and isoform A3B0." evidence="14">
    <original>RNKDFRHS</original>
    <variation>S</variation>
    <location>
        <begin position="1219"/>
        <end position="1226"/>
    </location>
</feature>
<feature type="splice variant" id="VSP_021403" description="In isoform A0B0." evidence="16 18">
    <location>
        <begin position="1219"/>
        <end position="1225"/>
    </location>
</feature>
<feature type="sequence conflict" description="In Ref. 4; BAE22691." evidence="21" ref="4">
    <original>LLATKS</original>
    <variation>AFSHQK</variation>
    <location>
        <begin position="1632"/>
        <end position="1637"/>
    </location>
</feature>
<feature type="sequence conflict" description="In Ref. 4; BAE23200." evidence="21" ref="4">
    <original>T</original>
    <variation>S</variation>
    <location>
        <position position="1640"/>
    </location>
</feature>
<feature type="sequence conflict" description="In Ref. 2; AAF28316 and 4; BAE23200/BAC65795." evidence="21" ref="2 4">
    <original>T</original>
    <variation>I</variation>
    <location>
        <position position="2332"/>
    </location>
</feature>
<feature type="sequence conflict" description="In Ref. 4; BAC27329." evidence="21" ref="4">
    <location>
        <position position="2482"/>
    </location>
</feature>
<feature type="sequence conflict" description="In Ref. 4; BAB27919." evidence="21" ref="4">
    <original>I</original>
    <variation>L</variation>
    <location>
        <position position="2636"/>
    </location>
</feature>
<reference key="1">
    <citation type="journal article" date="1999" name="J. Cell Biol.">
        <title>Mouse ten-m/Odz is a new family of dimeric type II transmembrane proteins expressed in many tissues.</title>
        <authorList>
            <person name="Oohashi T."/>
            <person name="Zhou X.-H."/>
            <person name="Feng K."/>
            <person name="Richter B."/>
            <person name="Moergelin M."/>
            <person name="Perez M.T."/>
            <person name="Su W.D."/>
            <person name="Chiquet-Ehrismann R."/>
            <person name="Rauch U."/>
            <person name="Faessler R."/>
        </authorList>
    </citation>
    <scope>NUCLEOTIDE SEQUENCE [MRNA] (ISOFORM A1B1)</scope>
    <scope>DOMAIN</scope>
    <source>
        <strain>BALB/cJ</strain>
        <tissue>Brain</tissue>
    </source>
</reference>
<reference key="2">
    <citation type="journal article" date="2000" name="Dev. Biol.">
        <title>The mammalian Odz gene family: homologs of a Drosophila pair-rule gene with expression implying distinct yet overlapping developmental roles.</title>
        <authorList>
            <person name="Ben-Zur T."/>
            <person name="Feige E."/>
            <person name="Motro B."/>
            <person name="Wides R."/>
        </authorList>
    </citation>
    <scope>NUCLEOTIDE SEQUENCE [MRNA] OF 354-2715 (ISOFORM A0B0)</scope>
</reference>
<reference key="3">
    <citation type="journal article" date="2018" name="Nature">
        <title>Teneurin-3 controls topographic circuit assembly in the hippocampus.</title>
        <authorList>
            <person name="Berns D.S."/>
            <person name="DeNardo L.A."/>
            <person name="Pederick D.T."/>
            <person name="Luo L."/>
        </authorList>
    </citation>
    <scope>NUCLEOTIDE SEQUENCE [MRNA] OF 707-1248 (A0B0; A0B1; A1B0; A1B1; A2B0; A2B1; A3B0 AND A3B1)</scope>
    <scope>FUNCTION</scope>
    <scope>SUBCELLULAR LOCATION</scope>
    <scope>SUBUNIT</scope>
    <scope>TISSUE SPECIFICITY</scope>
    <scope>DISRUPTION PHENOTYPE</scope>
</reference>
<reference key="4">
    <citation type="journal article" date="2005" name="Science">
        <title>The transcriptional landscape of the mammalian genome.</title>
        <authorList>
            <person name="Carninci P."/>
            <person name="Kasukawa T."/>
            <person name="Katayama S."/>
            <person name="Gough J."/>
            <person name="Frith M.C."/>
            <person name="Maeda N."/>
            <person name="Oyama R."/>
            <person name="Ravasi T."/>
            <person name="Lenhard B."/>
            <person name="Wells C."/>
            <person name="Kodzius R."/>
            <person name="Shimokawa K."/>
            <person name="Bajic V.B."/>
            <person name="Brenner S.E."/>
            <person name="Batalov S."/>
            <person name="Forrest A.R."/>
            <person name="Zavolan M."/>
            <person name="Davis M.J."/>
            <person name="Wilming L.G."/>
            <person name="Aidinis V."/>
            <person name="Allen J.E."/>
            <person name="Ambesi-Impiombato A."/>
            <person name="Apweiler R."/>
            <person name="Aturaliya R.N."/>
            <person name="Bailey T.L."/>
            <person name="Bansal M."/>
            <person name="Baxter L."/>
            <person name="Beisel K.W."/>
            <person name="Bersano T."/>
            <person name="Bono H."/>
            <person name="Chalk A.M."/>
            <person name="Chiu K.P."/>
            <person name="Choudhary V."/>
            <person name="Christoffels A."/>
            <person name="Clutterbuck D.R."/>
            <person name="Crowe M.L."/>
            <person name="Dalla E."/>
            <person name="Dalrymple B.P."/>
            <person name="de Bono B."/>
            <person name="Della Gatta G."/>
            <person name="di Bernardo D."/>
            <person name="Down T."/>
            <person name="Engstrom P."/>
            <person name="Fagiolini M."/>
            <person name="Faulkner G."/>
            <person name="Fletcher C.F."/>
            <person name="Fukushima T."/>
            <person name="Furuno M."/>
            <person name="Futaki S."/>
            <person name="Gariboldi M."/>
            <person name="Georgii-Hemming P."/>
            <person name="Gingeras T.R."/>
            <person name="Gojobori T."/>
            <person name="Green R.E."/>
            <person name="Gustincich S."/>
            <person name="Harbers M."/>
            <person name="Hayashi Y."/>
            <person name="Hensch T.K."/>
            <person name="Hirokawa N."/>
            <person name="Hill D."/>
            <person name="Huminiecki L."/>
            <person name="Iacono M."/>
            <person name="Ikeo K."/>
            <person name="Iwama A."/>
            <person name="Ishikawa T."/>
            <person name="Jakt M."/>
            <person name="Kanapin A."/>
            <person name="Katoh M."/>
            <person name="Kawasawa Y."/>
            <person name="Kelso J."/>
            <person name="Kitamura H."/>
            <person name="Kitano H."/>
            <person name="Kollias G."/>
            <person name="Krishnan S.P."/>
            <person name="Kruger A."/>
            <person name="Kummerfeld S.K."/>
            <person name="Kurochkin I.V."/>
            <person name="Lareau L.F."/>
            <person name="Lazarevic D."/>
            <person name="Lipovich L."/>
            <person name="Liu J."/>
            <person name="Liuni S."/>
            <person name="McWilliam S."/>
            <person name="Madan Babu M."/>
            <person name="Madera M."/>
            <person name="Marchionni L."/>
            <person name="Matsuda H."/>
            <person name="Matsuzawa S."/>
            <person name="Miki H."/>
            <person name="Mignone F."/>
            <person name="Miyake S."/>
            <person name="Morris K."/>
            <person name="Mottagui-Tabar S."/>
            <person name="Mulder N."/>
            <person name="Nakano N."/>
            <person name="Nakauchi H."/>
            <person name="Ng P."/>
            <person name="Nilsson R."/>
            <person name="Nishiguchi S."/>
            <person name="Nishikawa S."/>
            <person name="Nori F."/>
            <person name="Ohara O."/>
            <person name="Okazaki Y."/>
            <person name="Orlando V."/>
            <person name="Pang K.C."/>
            <person name="Pavan W.J."/>
            <person name="Pavesi G."/>
            <person name="Pesole G."/>
            <person name="Petrovsky N."/>
            <person name="Piazza S."/>
            <person name="Reed J."/>
            <person name="Reid J.F."/>
            <person name="Ring B.Z."/>
            <person name="Ringwald M."/>
            <person name="Rost B."/>
            <person name="Ruan Y."/>
            <person name="Salzberg S.L."/>
            <person name="Sandelin A."/>
            <person name="Schneider C."/>
            <person name="Schoenbach C."/>
            <person name="Sekiguchi K."/>
            <person name="Semple C.A."/>
            <person name="Seno S."/>
            <person name="Sessa L."/>
            <person name="Sheng Y."/>
            <person name="Shibata Y."/>
            <person name="Shimada H."/>
            <person name="Shimada K."/>
            <person name="Silva D."/>
            <person name="Sinclair B."/>
            <person name="Sperling S."/>
            <person name="Stupka E."/>
            <person name="Sugiura K."/>
            <person name="Sultana R."/>
            <person name="Takenaka Y."/>
            <person name="Taki K."/>
            <person name="Tammoja K."/>
            <person name="Tan S.L."/>
            <person name="Tang S."/>
            <person name="Taylor M.S."/>
            <person name="Tegner J."/>
            <person name="Teichmann S.A."/>
            <person name="Ueda H.R."/>
            <person name="van Nimwegen E."/>
            <person name="Verardo R."/>
            <person name="Wei C.L."/>
            <person name="Yagi K."/>
            <person name="Yamanishi H."/>
            <person name="Zabarovsky E."/>
            <person name="Zhu S."/>
            <person name="Zimmer A."/>
            <person name="Hide W."/>
            <person name="Bult C."/>
            <person name="Grimmond S.M."/>
            <person name="Teasdale R.D."/>
            <person name="Liu E.T."/>
            <person name="Brusic V."/>
            <person name="Quackenbush J."/>
            <person name="Wahlestedt C."/>
            <person name="Mattick J.S."/>
            <person name="Hume D.A."/>
            <person name="Kai C."/>
            <person name="Sasaki D."/>
            <person name="Tomaru Y."/>
            <person name="Fukuda S."/>
            <person name="Kanamori-Katayama M."/>
            <person name="Suzuki M."/>
            <person name="Aoki J."/>
            <person name="Arakawa T."/>
            <person name="Iida J."/>
            <person name="Imamura K."/>
            <person name="Itoh M."/>
            <person name="Kato T."/>
            <person name="Kawaji H."/>
            <person name="Kawagashira N."/>
            <person name="Kawashima T."/>
            <person name="Kojima M."/>
            <person name="Kondo S."/>
            <person name="Konno H."/>
            <person name="Nakano K."/>
            <person name="Ninomiya N."/>
            <person name="Nishio T."/>
            <person name="Okada M."/>
            <person name="Plessy C."/>
            <person name="Shibata K."/>
            <person name="Shiraki T."/>
            <person name="Suzuki S."/>
            <person name="Tagami M."/>
            <person name="Waki K."/>
            <person name="Watahiki A."/>
            <person name="Okamura-Oho Y."/>
            <person name="Suzuki H."/>
            <person name="Kawai J."/>
            <person name="Hayashizaki Y."/>
        </authorList>
    </citation>
    <scope>NUCLEOTIDE SEQUENCE [LARGE SCALE MRNA] OF 871-2715 (ISOFORM A0B0)</scope>
    <scope>NUCLEOTIDE SEQUENCE [LARGE SCALE MRNA] OF 1640-2715 (ISOFORM A1B1)</scope>
    <source>
        <strain>C57BL/6J</strain>
        <tissue>Egg</tissue>
        <tissue>Embryo</tissue>
        <tissue>Forelimb</tissue>
    </source>
</reference>
<reference key="5">
    <citation type="journal article" date="2003" name="DNA Res.">
        <title>Prediction of the coding sequences of mouse homologues of KIAA gene: II. The complete nucleotide sequences of 400 mouse KIAA-homologous cDNAs identified by screening of terminal sequences of cDNA clones randomly sampled from size-fractionated libraries.</title>
        <authorList>
            <person name="Okazaki N."/>
            <person name="Kikuno R."/>
            <person name="Ohara R."/>
            <person name="Inamoto S."/>
            <person name="Aizawa H."/>
            <person name="Yuasa S."/>
            <person name="Nakajima D."/>
            <person name="Nagase T."/>
            <person name="Ohara O."/>
            <person name="Koga H."/>
        </authorList>
    </citation>
    <scope>NUCLEOTIDE SEQUENCE [LARGE SCALE MRNA] OF 888-2715 (ISOFORM A1B1)</scope>
    <source>
        <tissue>Brain</tissue>
    </source>
</reference>
<reference key="6">
    <citation type="journal article" date="2002" name="J. Biol. Chem.">
        <title>All four members of the Ten-m/Odz family of transmembrane proteins form dimers.</title>
        <authorList>
            <person name="Feng K."/>
            <person name="Zhou X.H."/>
            <person name="Oohashi T."/>
            <person name="Morgelin M."/>
            <person name="Lustig A."/>
            <person name="Hirakawa S."/>
            <person name="Ninomiya Y."/>
            <person name="Engel J."/>
            <person name="Rauch U."/>
            <person name="Fassler R."/>
        </authorList>
    </citation>
    <scope>HOMODIMERIZATION</scope>
    <scope>HETERODIMERIZATION</scope>
</reference>
<reference key="7">
    <citation type="journal article" date="2003" name="Gene Expr. Patterns">
        <title>The murine Ten-m/Odz genes show distinct but overlapping expression patterns during development and in adult brain.</title>
        <authorList>
            <person name="Zhou X.H."/>
            <person name="Brandau O."/>
            <person name="Feng K."/>
            <person name="Oohashi T."/>
            <person name="Ninomiya Y."/>
            <person name="Rauch U."/>
            <person name="Fassler R."/>
        </authorList>
    </citation>
    <scope>TISSUE SPECIFICITY</scope>
    <scope>DEVELOPMENTAL STAGE</scope>
</reference>
<reference key="8">
    <citation type="journal article" date="2007" name="PLoS Biol.">
        <title>Ten_m3 regulates eye-specific patterning in the mammalian visual pathway and is required for binocular vision.</title>
        <authorList>
            <person name="Leamey C.A."/>
            <person name="Merlin S."/>
            <person name="Lattouf P."/>
            <person name="Sawatari A."/>
            <person name="Zhou X."/>
            <person name="Demel N."/>
            <person name="Glendining K.A."/>
            <person name="Oohashi T."/>
            <person name="Sur M."/>
            <person name="Fassler R."/>
        </authorList>
    </citation>
    <scope>FUNCTION IN AXON GUIDANCE</scope>
    <scope>DISRUPTION PHENOTYPE</scope>
    <scope>TISSUE SPECIFICITY</scope>
    <scope>DEVELOPMENTAL STAGE</scope>
</reference>
<reference key="9">
    <citation type="journal article" date="2008" name="Cereb. Cortex">
        <title>Differential gene expression between sensory neocortical areas: potential roles for Ten_m3 and Bcl6 in patterning visual and somatosensory pathways.</title>
        <authorList>
            <person name="Leamey C.A."/>
            <person name="Glendining K.A."/>
            <person name="Kreiman G."/>
            <person name="Kang N.D."/>
            <person name="Wang K.H."/>
            <person name="Fassler R."/>
            <person name="Sawatari A."/>
            <person name="Tonegawa S."/>
            <person name="Sur M."/>
        </authorList>
    </citation>
    <scope>FUNCTION IN CELL ADHESION</scope>
    <scope>SUBCELLULAR LOCATION</scope>
    <scope>TISSUE SPECIFICITY</scope>
</reference>
<reference key="10">
    <citation type="journal article" date="2009" name="Mol. Cell. Proteomics">
        <title>The mouse C2C12 myoblast cell surface N-linked glycoproteome: identification, glycosite occupancy, and membrane orientation.</title>
        <authorList>
            <person name="Gundry R.L."/>
            <person name="Raginski K."/>
            <person name="Tarasova Y."/>
            <person name="Tchernyshyov I."/>
            <person name="Bausch-Fluck D."/>
            <person name="Elliott S.T."/>
            <person name="Boheler K.R."/>
            <person name="Van Eyk J.E."/>
            <person name="Wollscheid B."/>
        </authorList>
    </citation>
    <scope>GLYCOSYLATION [LARGE SCALE ANALYSIS] AT ASN-380 AND ASN-2140</scope>
    <source>
        <tissue>Myoblast</tissue>
    </source>
</reference>
<reference key="11">
    <citation type="journal article" date="2010" name="Cell">
        <title>A tissue-specific atlas of mouse protein phosphorylation and expression.</title>
        <authorList>
            <person name="Huttlin E.L."/>
            <person name="Jedrychowski M.P."/>
            <person name="Elias J.E."/>
            <person name="Goswami T."/>
            <person name="Rad R."/>
            <person name="Beausoleil S.A."/>
            <person name="Villen J."/>
            <person name="Haas W."/>
            <person name="Sowa M.E."/>
            <person name="Gygi S.P."/>
        </authorList>
    </citation>
    <scope>IDENTIFICATION BY MASS SPECTROMETRY [LARGE SCALE ANALYSIS]</scope>
    <source>
        <tissue>Brain</tissue>
    </source>
</reference>
<reference key="12">
    <citation type="journal article" date="2010" name="J. Anat.">
        <title>Expression of Ten-m/Odz3 in the fibrous layer of mandibular condylar cartilage during postnatal growth in mice.</title>
        <authorList>
            <person name="Murakami T."/>
            <person name="Fukunaga T."/>
            <person name="Takeshita N."/>
            <person name="Hiratsuka K."/>
            <person name="Abiko Y."/>
            <person name="Yamashiro T."/>
            <person name="Takano-Yamamoto T."/>
        </authorList>
    </citation>
    <scope>FUNCTION IN CELL DIFFERENTIATION</scope>
    <scope>TISSUE SPECIFICITY</scope>
</reference>
<reference key="13">
    <citation type="journal article" date="2012" name="PLoS ONE">
        <title>Ten-m3 is required for the development of topography in the ipsilateral retinocollicular pathway.</title>
        <authorList>
            <person name="Dharmaratne N."/>
            <person name="Glendining K.A."/>
            <person name="Young T.R."/>
            <person name="Tran H."/>
            <person name="Sawatari A."/>
            <person name="Leamey C.A."/>
        </authorList>
    </citation>
    <scope>FUNCTION IN AXON GUIDANCE</scope>
    <scope>DISRUPTION PHENOTYPE</scope>
    <scope>TISSUE SPECIFICITY</scope>
    <scope>DEVELOPMENTAL STAGE</scope>
</reference>
<reference key="14">
    <citation type="journal article" date="2013" name="Cereb. Cortex">
        <title>Deletion of Ten-m3 induces the formation of eye dominance domains in mouse visual cortex.</title>
        <authorList>
            <person name="Merlin S."/>
            <person name="Horng S."/>
            <person name="Marotte L.R."/>
            <person name="Sur M."/>
            <person name="Sawatari A."/>
            <person name="Leamey C.A."/>
        </authorList>
    </citation>
    <scope>FUNCTION</scope>
    <scope>DISRUPTION PHENOTYPE</scope>
</reference>
<reference key="15">
    <citation type="journal article" date="2015" name="Eur. J. Neurosci.">
        <title>The glycoprotein Ten-m3 mediates topography and patterning of thalamostriatal projections from the parafascicular nucleus in mice.</title>
        <authorList>
            <person name="Tran H."/>
            <person name="Sawatari A."/>
            <person name="Leamey C.A."/>
        </authorList>
    </citation>
    <scope>FUNCTION</scope>
</reference>
<protein>
    <recommendedName>
        <fullName evidence="20">Teneurin-3</fullName>
        <shortName evidence="20">Ten-3</shortName>
    </recommendedName>
    <alternativeName>
        <fullName evidence="15 16">Protein Odd Oz/ten-m homolog 3</fullName>
    </alternativeName>
    <alternativeName>
        <fullName evidence="19">Tenascin-M3</fullName>
        <shortName evidence="19">Ten-m3</shortName>
    </alternativeName>
    <alternativeName>
        <fullName evidence="19">Teneurin transmembrane protein 3</fullName>
    </alternativeName>
</protein>
<accession>Q9WTS6</accession>
<accession>A0A2K9QKY6</accession>
<accession>A0A2K9QKZ0</accession>
<accession>A0A2K9QL01</accession>
<accession>A0A2K9QL03</accession>
<accession>A0A2K9QL04</accession>
<accession>A0A2K9QL11</accession>
<accession>A0A2K9QL36</accession>
<accession>A0A2K9QL87</accession>
<accession>Q3UVR9</accession>
<accession>Q3UX72</accession>
<accession>Q80TD2</accession>
<accession>Q8BSL5</accession>
<accession>Q9CSV2</accession>
<accession>Q9JLC1</accession>
<keyword id="KW-0002">3D-structure</keyword>
<keyword id="KW-0025">Alternative splicing</keyword>
<keyword id="KW-0130">Cell adhesion</keyword>
<keyword id="KW-1003">Cell membrane</keyword>
<keyword id="KW-0966">Cell projection</keyword>
<keyword id="KW-0221">Differentiation</keyword>
<keyword id="KW-1015">Disulfide bond</keyword>
<keyword id="KW-0245">EGF-like domain</keyword>
<keyword id="KW-0325">Glycoprotein</keyword>
<keyword id="KW-0472">Membrane</keyword>
<keyword id="KW-1185">Reference proteome</keyword>
<keyword id="KW-0677">Repeat</keyword>
<keyword id="KW-0812">Transmembrane</keyword>
<keyword id="KW-1133">Transmembrane helix</keyword>
<name>TEN3_MOUSE</name>
<evidence type="ECO:0000255" key="1"/>
<evidence type="ECO:0000255" key="2">
    <source>
        <dbReference type="PROSITE-ProRule" id="PRU00076"/>
    </source>
</evidence>
<evidence type="ECO:0000255" key="3">
    <source>
        <dbReference type="PROSITE-ProRule" id="PRU00694"/>
    </source>
</evidence>
<evidence type="ECO:0000256" key="4">
    <source>
        <dbReference type="SAM" id="MobiDB-lite"/>
    </source>
</evidence>
<evidence type="ECO:0000269" key="5">
    <source>
    </source>
</evidence>
<evidence type="ECO:0000269" key="6">
    <source>
    </source>
</evidence>
<evidence type="ECO:0000269" key="7">
    <source>
    </source>
</evidence>
<evidence type="ECO:0000269" key="8">
    <source>
    </source>
</evidence>
<evidence type="ECO:0000269" key="9">
    <source>
    </source>
</evidence>
<evidence type="ECO:0000269" key="10">
    <source>
    </source>
</evidence>
<evidence type="ECO:0000269" key="11">
    <source>
    </source>
</evidence>
<evidence type="ECO:0000269" key="12">
    <source>
    </source>
</evidence>
<evidence type="ECO:0000269" key="13">
    <source>
    </source>
</evidence>
<evidence type="ECO:0000269" key="14">
    <source>
    </source>
</evidence>
<evidence type="ECO:0000303" key="15">
    <source>
    </source>
</evidence>
<evidence type="ECO:0000303" key="16">
    <source>
    </source>
</evidence>
<evidence type="ECO:0000303" key="17">
    <source>
    </source>
</evidence>
<evidence type="ECO:0000303" key="18">
    <source>
    </source>
</evidence>
<evidence type="ECO:0000303" key="19">
    <source>
    </source>
</evidence>
<evidence type="ECO:0000303" key="20">
    <source>
    </source>
</evidence>
<evidence type="ECO:0000305" key="21"/>
<evidence type="ECO:0000305" key="22">
    <source>
    </source>
</evidence>
<evidence type="ECO:0000305" key="23">
    <source>
    </source>
</evidence>
<evidence type="ECO:0000312" key="24">
    <source>
        <dbReference type="MGI" id="MGI:1345183"/>
    </source>
</evidence>
<proteinExistence type="evidence at protein level"/>
<comment type="function">
    <text evidence="7 8 10 11 12 13 14">Involved in neural development by regulating the establishment of proper connectivity within the nervous system (PubMed:17478416, PubMed:17803360, PubMed:22499796, PubMed:23028443, PubMed:25406022, PubMed:29414938). Acts in both pre- and postsynaptic neurons in the hippocampus to control the assembly of a precise topographic projection: required in both CA1 and subicular neurons for the precise targeting of proximal CA1 axons to distal subiculum, probably by promoting homophilic cell adhesion (PubMed:29414938). Promotes homophilic adhesion in a splicing isoform-dependent manner: most isoforms (isoform-type A and type-B) can mediate homophilic interaction (PubMed:29414938). Promotes axon guidance (PubMed:23028443). Required for proper dendrite morphogenesis and axon targeting in the vertebrate visual system, thereby playing a key role in the development of the visual pathway (PubMed:17803360, PubMed:22499796, PubMed:23028443, PubMed:25406022). Regulates the formation in ipsilateral retinal mapping to both the dorsal lateral geniculate nucleus (dLGN) and the superior colliculus (SC) (PubMed:17803360, PubMed:23028443). May also be involved in the differentiation of the fibroblast-like cells in the superficial layer of mandibular condylar cartilage into chondrocytes (PubMed:20636325).</text>
</comment>
<comment type="subunit">
    <text evidence="5 14">Homodimer; disulfide-linked; to mediate homophilic cell adhesion (PubMed:12000766, PubMed:29414938). Most isoforms (isoform-type A and type-B) can mediate homophilic interaction (PubMed:29414938). Heterodimer with either TENM1 or TENM2 (PubMed:12000766). May also form heterodimer with TENM4 (PubMed:12000766). Isoform A0B0: Does not form homodimer to mediate homophilic cell adhesion. Isoform A0B0: Heterodimer with ADGRL3 (PubMed:29414938).</text>
</comment>
<comment type="subcellular location">
    <subcellularLocation>
        <location evidence="14 23">Cell membrane</location>
        <topology evidence="7">Single-pass membrane protein</topology>
    </subcellularLocation>
    <subcellularLocation>
        <location evidence="7">Cell projection</location>
        <location evidence="7">Axon</location>
    </subcellularLocation>
</comment>
<comment type="alternative products">
    <event type="alternative splicing"/>
    <isoform>
        <id>Q9WTS6-1</id>
        <name evidence="20">A1B1</name>
        <sequence type="displayed"/>
    </isoform>
    <isoform>
        <id>Q9WTS6-2</id>
        <name evidence="20">A0B0</name>
        <sequence type="described" ref="VSP_021402 VSP_021403"/>
    </isoform>
    <isoform>
        <id>Q9WTS6-3</id>
        <name evidence="20">A0B1</name>
        <sequence type="described" ref="VSP_021402"/>
    </isoform>
    <isoform>
        <id>Q9WTS6-4</id>
        <name evidence="20">A1B0</name>
        <sequence type="described" ref="VSP_059562"/>
    </isoform>
    <isoform>
        <id>Q9WTS6-5</id>
        <name evidence="20">A2B1</name>
        <sequence type="described" ref="VSP_059560"/>
    </isoform>
    <isoform>
        <id>Q9WTS6-6</id>
        <name evidence="20">A2B0</name>
        <sequence type="described" ref="VSP_059560 VSP_059562"/>
    </isoform>
    <isoform>
        <id>Q9WTS6-7</id>
        <name evidence="20">A3B1</name>
        <sequence type="described" ref="VSP_059561"/>
    </isoform>
    <isoform>
        <id>Q9WTS6-8</id>
        <name evidence="20">A3B0</name>
        <sequence type="described" ref="VSP_059561 VSP_059562"/>
    </isoform>
    <text evidence="14">8 different isoforms are produced by the inclusion or exclusion of 'exon 12' and 'exon 20' (at splice sites A and B, respectively). The different isoforms probably mediate a combination of specific homophilic and/or heterophilic interactions.</text>
</comment>
<comment type="tissue specificity">
    <text evidence="6 7 8 10 12 14">In brain, expressed in highly specific regions of the postnatal brain: expressed in restricted domains of the developing hippocampal region, including proximal CA1, distal subiculum, and medial entorhinal cortex (at protein level) (PubMed:29414938). Expression matches with topographic connectivity between entorhinal cortex, CA1, and subiculum (at protein level) (PubMed:29414938). Also specifically expressed in subregions of the presubiculum, parasubiculum, medial mammillary nucleus and anteroventral thalamic nucleus that are topographically connected with subiculum or entorhinal cortex (at protein level) (PubMed:29414938). Expressed in neurons of the developing visual pathway (at protein level). Expressed in the dorsal and ventral lateral geniculate nucleus (dLGN and vLGN) and optic tract at birth. Expressed in ipsilateral retinal axons of terminal zones (TZs) in the developing superior colliculus (SC) throughout the first postnatal week. Expressed in the layer V of the visual caudal cortex. Expressed in the femoral and mandibular condylar cartilages. Strongly expressed in fibrous and proliferating chondrocytes. Poorly expressed in mature chondrocytes. Not expressed in hypertrophic chondrocytes (PubMed:12915301, PubMed:17478416, PubMed:17803360, PubMed:20636325, PubMed:23028443).</text>
</comment>
<comment type="developmental stage">
    <text evidence="6 8 12">Expressed in the neural plate at 7.5 dpc. Expressed in the forebrain and telencephalon at 8.5 dpc. Expressed in the diencephalon, spinal cord and midbrain at 12.5 dpc. Expressed in the retinal ganglion cell (RGC) layer and the dorsal lateral geniculate nucleus (dLGN) at 16 dpc. Expressed in ipsilateral retinal axons of terminal zones (TZs) in the developing superior colliculus (SC) at 16 dpc, onward.</text>
</comment>
<comment type="domain">
    <text evidence="22">EGF-like domains 2 and 5 which have an odd number of cysteines might enable the formation of intermolecular disulfide bonds.</text>
</comment>
<comment type="domain">
    <text evidence="22">Cytoplasmic proline-rich regions could serve as docking domains for intracellular SH3-containing proteins.</text>
</comment>
<comment type="disruption phenotype">
    <text evidence="8 11 12 14">Mice show impair binocular vision, consistent with altered ipsilateral retinal neuron projections both into the ventrolateral region of the lateral geniculate nucleus (dLGN) and the superior colliculus (SC) (PubMed:17803360, PubMed:23028443). The distribution of ipsilateral drive in V1 is altered, leading to an expanded but visuotopically misaligned binocular zone (PubMed:22499796). Conditional knockout mice lacking Tenm3 in CA1 neurons display proximal CA1 axons spread throughout the entire subiculum, instead of projecting only to distal regions (PubMed:29414938). When Tenm3 is absent from a subset of distal subicular cells, Tenm3-containing proximal CA1 axons do not target Tenm3 and instead innervate nearby Tenm3 regions (PubMed:29414938).</text>
</comment>
<comment type="similarity">
    <text evidence="21">Belongs to the tenascin family. Teneurin subfamily.</text>
</comment>
<comment type="sequence caution" evidence="21">
    <conflict type="erroneous initiation">
        <sequence resource="EMBL-CDS" id="BAE22691"/>
    </conflict>
    <text>Truncated N-terminus.</text>
</comment>
<gene>
    <name evidence="24" type="primary">Tenm3</name>
    <name evidence="17" type="synonym">Kiaa1455</name>
    <name evidence="15 16" type="synonym">Odz3</name>
    <name evidence="19" type="synonym">Tnm3</name>
</gene>
<sequence>MDVKERRPYCSLTKSRREKERRYTNSSADNEECRVPTQKSYSSSETLKAFDHDYSRLLYGNRVKDLVHREADEYTRQGQNFTLRQLGVCESATRRGVAFCAEMGLPHRGYSISAGSDADTENEAVMSPEHAMRLWGRGVKSGRSSCLSSRSNSALTLTDTEHENRSDSESEQPSNNPGQPTLQPLPPSHKQHPAQHHPSITSLNRNSLTNRRNQSPAPPAALPAELQTTPESVQLQDSWVLGSNVPLESRHFLFKTGTGTTPLFSTATPGYTMASGSVYSPPTRPLPRNTLSRSAFKFKKSSKYCSWRCTALCAVGVSVLLAILLSYFIAMHLFGLNWHLQQTENDTFENGKVNSDTVPTNTVSLPSGDNGKLGGFTHENNTIDSGELDIGRRAIQEVPPGIFWRSQLFIDQPQFLKFNISLQKDALIGVYGRKGLPPSHTQYDFVELLDGSRLIAREQRNLVESERAGRQARSVSLHEAGFIQYLDSGIWHLAFYNDGKNPEQVSFNTIVIESVVECPRNCHGNGECVSGTCHCFPGFLGPDCSRAACPVLCSGNGQYSKGRCLCFSGWKGTECDVPTTQCIDPQCGGRGICIMGSCACNSGYKGENCEEADCLDPGCSNHGVCIHGECHCNPGWGGSNCEILKTMCADQCSGHGTYLQESGSCTCDPNWTGPDCSNEICSVDCGSHGVCMGGSCRCEEGWTGPACNQRACHPRCAEHGTCKDGKCECSQGWNGEHCTIAHYLDKIVKEGCPGLCNSNGRCTLDQNGWHCVCQPGWRGAGCDVAMETLCTDSKDNEGDGLIDCMDPDCCLQSSCQNQPYCRGLPDPQDIISQSLQTPSQQAAKSFYDRISFLIGSDSTHVLPGESPFNKSLASVIRGQVLTADGTPLIGVNVSFLHYSEYGYTITRQDGMFDLVANGGASLTLVFERSPFLTQYHTVWIPWNVFYVMDTLVMKKEENDIPSCDLSGFVRPSPIIVSSPLSTFFRSSPEDSPIIPETQVLHEETTIPGTDLKLSYLSSRAAGYKSVLKITMTQAVIPFNLMKVHLMVAVVGRLFQKWFPASPNLAYTFIWDKTDAYNQKVYGLSEAVVSVGYEYESCLDLTLWEKRTAVLQGYELDASNMGGWTLDKHHVLDVQNGILYKGNGENQFISQQPPVVSSIMGNGRRRSISCPSCNGQADGNKLLAPVALACGIDGSLYVGDFNYVRRIFPSGNVTSVLELRNKDFRHSSNPAHRYYLATDPVTGDLYVSDTNTRRIYRPKSLTGAKDLTKNAEVVAGTGEQCLPFDEARCGDGGKAVEATLMSPKGMAIDKNGLIYFVDGTMIRKVDQNGIISTLLGSNDLTSARPLTCDTSMHISQVRLEWPTDLAINPMDNSIYVLDNNVVLQITENRQVRIAAGRPMHCQVPGVEYPVGKHAVQTTLESATAIAVSYSGVLYITETDEKKINRIRQVTTDGEISLVAGIPSECDCKNDANCDCYQSGDGYAKDAKLNAPSSLAASPDGTLYIADLGNIRIRAVSKNKPLLNSMNFYEVASPTDQELYIFDINGTHQYTVSLVTGDYLYNFSYSNDNDVTAVTDSNGNTLRIRRDPNRMPVRVVSPDNQVIWLTIGTNGCLKSMTAQGLELVLFTYHGNSGLLATKSDETGWTTFFDYDSEGRLTNVTFPTGVVTNLHGDMDKAITVDIESSSREEDVSITSNLSSIDSFYTMVQDQLRNSYQIGYDGSLRIFYASGLDSHYQTEPHVLAGTANPTVAKRNMTLPGENGQNLVEWRFRKEQAQGKVNVFGRKLRVNGRNLLSVDFDRTTKTEKIYDDHRKFLLRIAYDTSGHPTLWLPSSKLMAVNVTYSSTGQIASIQRGTTSEKVDYDSQGRIVSRVFADGKTWSYTYLEKSMVLLLHSQRQYIFEYDMWDRLSAITMPSVARHTMQTIRSIGYYRNIYNPPESNASIITDYNEEGLLLQTAFLGTSRRVLFKYRRQTRLSEILYDSTRVSFTYDETAGVLKTVNLQSDGFICTIRYRQIGPLIDRQIFRFSEDGMVNARFDYSYDNSFRVTSMQGVINETPLPIDLYQFDDISGKVEQFGKFGVIYYDINQIISTAVMTYTKHFDAHGRIKEIQYEIFRSLMYWITIQYDNMGRVTKREIKIGPFANTTKYAYEYDVDGQLQTVYLNEKIMWRYNYDLNGNLHLLNPSSSARLTPLRYDLRDRITRLGDVQYRLDEDGFLRQRGTEIFEYSSKGLLTRVYSKGSGWTVIYRYDGLGRRVSSKTSLGQHLQFFYADLTYPTRITHVYNHSSSEITSLYYDLQGHLFAMEISSGDEFYIASDNTGTPLAVFSSNGLMLKQTQYTAYGEIYFDSNVDFQLVIGFHGGLYDPLTKLIHFGERDYDILAGRWTTPDIEIWKRIGKDPAPFNLYMFRNNNPASKIHDVKDYITDVNSWLVTFGFHLHNAIPGFPVPKFDLTEPSYELVKSQQWEDVPPIFGVQQQVARQAKAFLSLGKMAEVQVSRRKAGAEQSWLWFATVKSLIGKGVMLAVSQGRVQTNVLNIANEDCIKVAAVLNNAFYLENLHFTIEGKDTHYFIKTTTPESDLGTLRLTSGRKALENGINVTVSQSTTVVNGRTRRFADVEMQFGALALHVRYGMTLDEEKARILEQARQRALARAWAREQQRVRDGEEGARLWTEGEKRQLLSAGKVQGYDGYYVLSVEQYPELADSANNIQFLRQSEIGKR</sequence>